<evidence type="ECO:0000255" key="1">
    <source>
        <dbReference type="HAMAP-Rule" id="MF_00705"/>
    </source>
</evidence>
<feature type="chain" id="PRO_0000349171" description="IMP cyclohydrolase">
    <location>
        <begin position="1"/>
        <end position="201"/>
    </location>
</feature>
<gene>
    <name evidence="1" type="primary">purO</name>
    <name type="ordered locus">UNCMA_22650</name>
    <name type="ORF">RCIX491</name>
</gene>
<accession>Q0W6S4</accession>
<proteinExistence type="inferred from homology"/>
<protein>
    <recommendedName>
        <fullName evidence="1">IMP cyclohydrolase</fullName>
        <ecNumber evidence="1">3.5.4.10</ecNumber>
    </recommendedName>
    <alternativeName>
        <fullName evidence="1">IMP synthase</fullName>
    </alternativeName>
    <alternativeName>
        <fullName evidence="1">Inosinicase</fullName>
    </alternativeName>
</protein>
<organism>
    <name type="scientific">Methanocella arvoryzae (strain DSM 22066 / NBRC 105507 / MRE50)</name>
    <dbReference type="NCBI Taxonomy" id="351160"/>
    <lineage>
        <taxon>Archaea</taxon>
        <taxon>Methanobacteriati</taxon>
        <taxon>Methanobacteriota</taxon>
        <taxon>Stenosarchaea group</taxon>
        <taxon>Methanomicrobia</taxon>
        <taxon>Methanocellales</taxon>
        <taxon>Methanocellaceae</taxon>
        <taxon>Methanocella</taxon>
    </lineage>
</organism>
<reference key="1">
    <citation type="journal article" date="2006" name="Science">
        <title>Genome of rice cluster I archaea -- the key methane producers in the rice rhizosphere.</title>
        <authorList>
            <person name="Erkel C."/>
            <person name="Kube M."/>
            <person name="Reinhardt R."/>
            <person name="Liesack W."/>
        </authorList>
    </citation>
    <scope>NUCLEOTIDE SEQUENCE [LARGE SCALE GENOMIC DNA]</scope>
    <source>
        <strain>DSM 22066 / NBRC 105507 / MRE50</strain>
    </source>
</reference>
<sequence length="201" mass="22268">MYVGRFVTIGKTNGRLWAGYRVSSRSFPNRYAVKLGDDKVAIMPKDVKDLEKSPYISYNCIRVLPSVAVVTNGSHTDAIVEKIEMGYPIRDALALSLLAMDYEKDSLDTPRIAAVVSRHVAYLGIVTKDGLNVSTFPMGDNECLMVATYEKTMFSRLTVDASSAEEVARKMYDLTFEKPVCAAGAYQVDDHFELGVYNGPQ</sequence>
<name>PURO_METAR</name>
<comment type="function">
    <text evidence="1">Catalyzes the cyclization of 5-formylamidoimidazole-4-carboxamide ribonucleotide to IMP.</text>
</comment>
<comment type="catalytic activity">
    <reaction evidence="1">
        <text>IMP + H2O = 5-formamido-1-(5-phospho-D-ribosyl)imidazole-4-carboxamide</text>
        <dbReference type="Rhea" id="RHEA:18445"/>
        <dbReference type="ChEBI" id="CHEBI:15377"/>
        <dbReference type="ChEBI" id="CHEBI:58053"/>
        <dbReference type="ChEBI" id="CHEBI:58467"/>
        <dbReference type="EC" id="3.5.4.10"/>
    </reaction>
</comment>
<comment type="pathway">
    <text evidence="1">Purine metabolism; IMP biosynthesis via de novo pathway; IMP from 5-formamido-1-(5-phospho-D-ribosyl)imidazole-4-carboxamide: step 1/1.</text>
</comment>
<comment type="similarity">
    <text evidence="1">Belongs to the archaeal IMP cyclohydrolase family.</text>
</comment>
<dbReference type="EC" id="3.5.4.10" evidence="1"/>
<dbReference type="EMBL" id="AM114193">
    <property type="protein sequence ID" value="CAJ35919.1"/>
    <property type="molecule type" value="Genomic_DNA"/>
</dbReference>
<dbReference type="RefSeq" id="WP_012036585.1">
    <property type="nucleotide sequence ID" value="NC_009464.1"/>
</dbReference>
<dbReference type="SMR" id="Q0W6S4"/>
<dbReference type="STRING" id="351160.RCIX491"/>
<dbReference type="GeneID" id="5144770"/>
<dbReference type="KEGG" id="rci:RCIX491"/>
<dbReference type="PATRIC" id="fig|351160.9.peg.2318"/>
<dbReference type="eggNOG" id="arCOG04727">
    <property type="taxonomic scope" value="Archaea"/>
</dbReference>
<dbReference type="OrthoDB" id="92928at2157"/>
<dbReference type="UniPathway" id="UPA00074">
    <property type="reaction ID" value="UER00135"/>
</dbReference>
<dbReference type="Proteomes" id="UP000000663">
    <property type="component" value="Chromosome"/>
</dbReference>
<dbReference type="GO" id="GO:0003937">
    <property type="term" value="F:IMP cyclohydrolase activity"/>
    <property type="evidence" value="ECO:0007669"/>
    <property type="project" value="UniProtKB-UniRule"/>
</dbReference>
<dbReference type="GO" id="GO:0006189">
    <property type="term" value="P:'de novo' IMP biosynthetic process"/>
    <property type="evidence" value="ECO:0007669"/>
    <property type="project" value="UniProtKB-UniRule"/>
</dbReference>
<dbReference type="Gene3D" id="3.60.20.20">
    <property type="entry name" value="Inosine monophosphate cyclohydrolase-like"/>
    <property type="match status" value="1"/>
</dbReference>
<dbReference type="HAMAP" id="MF_00705">
    <property type="entry name" value="IMP_cyclohydrol"/>
    <property type="match status" value="1"/>
</dbReference>
<dbReference type="InterPro" id="IPR010191">
    <property type="entry name" value="IMP_cyclohydrolase"/>
</dbReference>
<dbReference type="InterPro" id="IPR020600">
    <property type="entry name" value="IMP_cyclohydrolase-like"/>
</dbReference>
<dbReference type="InterPro" id="IPR036795">
    <property type="entry name" value="IMP_cyclohydrolase-like_sf"/>
</dbReference>
<dbReference type="NCBIfam" id="NF003167">
    <property type="entry name" value="PRK04151.1"/>
    <property type="match status" value="1"/>
</dbReference>
<dbReference type="NCBIfam" id="TIGR01922">
    <property type="entry name" value="purO_arch"/>
    <property type="match status" value="1"/>
</dbReference>
<dbReference type="Pfam" id="PF07826">
    <property type="entry name" value="IMP_cyclohyd"/>
    <property type="match status" value="1"/>
</dbReference>
<dbReference type="PIRSF" id="PIRSF004866">
    <property type="entry name" value="IMP_cclhdr_arch"/>
    <property type="match status" value="1"/>
</dbReference>
<dbReference type="SUPFAM" id="SSF75569">
    <property type="entry name" value="Archaeal IMP cyclohydrolase PurO"/>
    <property type="match status" value="1"/>
</dbReference>
<keyword id="KW-0378">Hydrolase</keyword>
<keyword id="KW-0658">Purine biosynthesis</keyword>
<keyword id="KW-1185">Reference proteome</keyword>